<organism>
    <name type="scientific">Saccharomyces cerevisiae (strain ATCC 204508 / S288c)</name>
    <name type="common">Baker's yeast</name>
    <dbReference type="NCBI Taxonomy" id="559292"/>
    <lineage>
        <taxon>Eukaryota</taxon>
        <taxon>Fungi</taxon>
        <taxon>Dikarya</taxon>
        <taxon>Ascomycota</taxon>
        <taxon>Saccharomycotina</taxon>
        <taxon>Saccharomycetes</taxon>
        <taxon>Saccharomycetales</taxon>
        <taxon>Saccharomycetaceae</taxon>
        <taxon>Saccharomyces</taxon>
    </lineage>
</organism>
<dbReference type="EMBL" id="U18922">
    <property type="protein sequence ID" value="AAB64715.1"/>
    <property type="molecule type" value="Genomic_DNA"/>
</dbReference>
<dbReference type="EMBL" id="BK006939">
    <property type="protein sequence ID" value="DAA80291.1"/>
    <property type="molecule type" value="Genomic_DNA"/>
</dbReference>
<dbReference type="PIR" id="S50691">
    <property type="entry name" value="S50691"/>
</dbReference>
<dbReference type="RefSeq" id="NP_001335771.1">
    <property type="nucleotide sequence ID" value="NM_001348829.1"/>
</dbReference>
<dbReference type="DIP" id="DIP-7678N"/>
<dbReference type="FunCoup" id="P40103">
    <property type="interactions" value="35"/>
</dbReference>
<dbReference type="IntAct" id="P40103">
    <property type="interactions" value="1"/>
</dbReference>
<dbReference type="STRING" id="4932.YER188W"/>
<dbReference type="PaxDb" id="4932-YER188W"/>
<dbReference type="EnsemblFungi" id="YER188W_mRNA">
    <property type="protein sequence ID" value="YER188W"/>
    <property type="gene ID" value="YER188W"/>
</dbReference>
<dbReference type="GeneID" id="856938"/>
<dbReference type="AGR" id="SGD:S000000990"/>
<dbReference type="SGD" id="S000000990">
    <property type="gene designation" value="YER188W"/>
</dbReference>
<dbReference type="HOGENOM" id="CLU_1161936_0_0_1"/>
<dbReference type="InParanoid" id="P40103"/>
<dbReference type="OMA" id="EQMEFDQ"/>
<dbReference type="OrthoDB" id="4037183at2759"/>
<dbReference type="PRO" id="PR:P40103"/>
<dbReference type="Proteomes" id="UP000002311">
    <property type="component" value="Chromosome V"/>
</dbReference>
<dbReference type="RNAct" id="P40103">
    <property type="molecule type" value="protein"/>
</dbReference>
<name>YE18_YEAST</name>
<proteinExistence type="evidence at transcript level"/>
<gene>
    <name type="ordered locus">YER188W</name>
</gene>
<comment type="induction">
    <text evidence="1">Induced under anaerobic growth conditions.</text>
</comment>
<evidence type="ECO:0000269" key="1">
    <source>
    </source>
</evidence>
<accession>P40103</accession>
<accession>A0A1S0T069</accession>
<feature type="chain" id="PRO_0000202664" description="Uncharacterized protein YER188W">
    <location>
        <begin position="1"/>
        <end position="239"/>
    </location>
</feature>
<reference key="1">
    <citation type="journal article" date="1997" name="Nature">
        <title>The nucleotide sequence of Saccharomyces cerevisiae chromosome V.</title>
        <authorList>
            <person name="Dietrich F.S."/>
            <person name="Mulligan J.T."/>
            <person name="Hennessy K.M."/>
            <person name="Yelton M.A."/>
            <person name="Allen E."/>
            <person name="Araujo R."/>
            <person name="Aviles E."/>
            <person name="Berno A."/>
            <person name="Brennan T."/>
            <person name="Carpenter J."/>
            <person name="Chen E."/>
            <person name="Cherry J.M."/>
            <person name="Chung E."/>
            <person name="Duncan M."/>
            <person name="Guzman E."/>
            <person name="Hartzell G."/>
            <person name="Hunicke-Smith S."/>
            <person name="Hyman R.W."/>
            <person name="Kayser A."/>
            <person name="Komp C."/>
            <person name="Lashkari D."/>
            <person name="Lew H."/>
            <person name="Lin D."/>
            <person name="Mosedale D."/>
            <person name="Nakahara K."/>
            <person name="Namath A."/>
            <person name="Norgren R."/>
            <person name="Oefner P."/>
            <person name="Oh C."/>
            <person name="Petel F.X."/>
            <person name="Roberts D."/>
            <person name="Sehl P."/>
            <person name="Schramm S."/>
            <person name="Shogren T."/>
            <person name="Smith V."/>
            <person name="Taylor P."/>
            <person name="Wei Y."/>
            <person name="Botstein D."/>
            <person name="Davis R.W."/>
        </authorList>
    </citation>
    <scope>NUCLEOTIDE SEQUENCE [LARGE SCALE GENOMIC DNA]</scope>
    <source>
        <strain>ATCC 204508 / S288c</strain>
    </source>
</reference>
<reference key="2">
    <citation type="journal article" date="2014" name="G3 (Bethesda)">
        <title>The reference genome sequence of Saccharomyces cerevisiae: Then and now.</title>
        <authorList>
            <person name="Engel S.R."/>
            <person name="Dietrich F.S."/>
            <person name="Fisk D.G."/>
            <person name="Binkley G."/>
            <person name="Balakrishnan R."/>
            <person name="Costanzo M.C."/>
            <person name="Dwight S.S."/>
            <person name="Hitz B.C."/>
            <person name="Karra K."/>
            <person name="Nash R.S."/>
            <person name="Weng S."/>
            <person name="Wong E.D."/>
            <person name="Lloyd P."/>
            <person name="Skrzypek M.S."/>
            <person name="Miyasato S.R."/>
            <person name="Simison M."/>
            <person name="Cherry J.M."/>
        </authorList>
    </citation>
    <scope>GENOME REANNOTATION</scope>
    <source>
        <strain>ATCC 204508 / S288c</strain>
    </source>
</reference>
<reference key="3">
    <citation type="journal article" date="1999" name="J. Bacteriol.">
        <title>Genome-wide transcriptional analysis of aerobic and anaerobic chemostat cultures of Saccharomyces cerevisiae.</title>
        <authorList>
            <person name="ter Linde J.J.M."/>
            <person name="Liang H."/>
            <person name="Davis R.W."/>
            <person name="Steensma H.Y."/>
            <person name="van Dijken J.P."/>
            <person name="Pronk J.T."/>
        </authorList>
    </citation>
    <scope>INDUCTION</scope>
</reference>
<protein>
    <recommendedName>
        <fullName>Uncharacterized protein YER188W</fullName>
    </recommendedName>
</protein>
<sequence length="239" mass="27312">MMPTYLGKLTWSYFFTTLGLACAYNVTEQMEFDQFKSDYLACLAPEHRNIVVDLASNGFITISPMANATIDFEDVTSDYFNCTDVNTNVQVTIASFYNEYGFGPDDNGYYHAMEEPSEFERHDMDVRLYRPYYPGEFVMGRRSDALGVTGFDQKDCAGEGFYDEQTAATSCQNIGSTQYAKSVRSYNYGCCGGAVWIRIWPHHNCSKGHDHHFKIRPGQMLCWNVNPYSWMQPESGWNP</sequence>
<keyword id="KW-1185">Reference proteome</keyword>